<comment type="catalytic activity">
    <reaction evidence="2">
        <text>a primary alcohol + NAD(+) = an aldehyde + NADH + H(+)</text>
        <dbReference type="Rhea" id="RHEA:10736"/>
        <dbReference type="ChEBI" id="CHEBI:15378"/>
        <dbReference type="ChEBI" id="CHEBI:15734"/>
        <dbReference type="ChEBI" id="CHEBI:17478"/>
        <dbReference type="ChEBI" id="CHEBI:57540"/>
        <dbReference type="ChEBI" id="CHEBI:57945"/>
        <dbReference type="EC" id="1.1.1.1"/>
    </reaction>
</comment>
<comment type="catalytic activity">
    <reaction evidence="2">
        <text>a secondary alcohol + NAD(+) = a ketone + NADH + H(+)</text>
        <dbReference type="Rhea" id="RHEA:10740"/>
        <dbReference type="ChEBI" id="CHEBI:15378"/>
        <dbReference type="ChEBI" id="CHEBI:17087"/>
        <dbReference type="ChEBI" id="CHEBI:35681"/>
        <dbReference type="ChEBI" id="CHEBI:57540"/>
        <dbReference type="ChEBI" id="CHEBI:57945"/>
        <dbReference type="EC" id="1.1.1.1"/>
    </reaction>
</comment>
<comment type="cofactor">
    <cofactor evidence="2">
        <name>Zn(2+)</name>
        <dbReference type="ChEBI" id="CHEBI:29105"/>
    </cofactor>
    <text evidence="2">Binds 2 Zn(2+) ions per subunit.</text>
</comment>
<comment type="subunit">
    <text evidence="2">Homodimer (By similarity). Homotetramer.</text>
</comment>
<comment type="subcellular location">
    <subcellularLocation>
        <location evidence="2">Cytoplasm</location>
    </subcellularLocation>
</comment>
<comment type="similarity">
    <text evidence="3">Belongs to the zinc-containing alcohol dehydrogenase family.</text>
</comment>
<dbReference type="EC" id="1.1.1.1" evidence="2"/>
<dbReference type="EMBL" id="M25153">
    <property type="protein sequence ID" value="AAA33807.1"/>
    <property type="molecule type" value="mRNA"/>
</dbReference>
<dbReference type="PIR" id="S11853">
    <property type="entry name" value="DEPOA1"/>
</dbReference>
<dbReference type="SMR" id="P14674"/>
<dbReference type="STRING" id="4113.P14674"/>
<dbReference type="InParanoid" id="P14674"/>
<dbReference type="Proteomes" id="UP000011115">
    <property type="component" value="Unassembled WGS sequence"/>
</dbReference>
<dbReference type="ExpressionAtlas" id="P14674">
    <property type="expression patterns" value="baseline"/>
</dbReference>
<dbReference type="GO" id="GO:0005829">
    <property type="term" value="C:cytosol"/>
    <property type="evidence" value="ECO:0000318"/>
    <property type="project" value="GO_Central"/>
</dbReference>
<dbReference type="GO" id="GO:0004022">
    <property type="term" value="F:alcohol dehydrogenase (NAD+) activity"/>
    <property type="evidence" value="ECO:0000318"/>
    <property type="project" value="GO_Central"/>
</dbReference>
<dbReference type="GO" id="GO:0051903">
    <property type="term" value="F:S-(hydroxymethyl)glutathione dehydrogenase [NAD(P)+] activity"/>
    <property type="evidence" value="ECO:0000318"/>
    <property type="project" value="GO_Central"/>
</dbReference>
<dbReference type="GO" id="GO:0008270">
    <property type="term" value="F:zinc ion binding"/>
    <property type="evidence" value="ECO:0000318"/>
    <property type="project" value="GO_Central"/>
</dbReference>
<dbReference type="GO" id="GO:0009820">
    <property type="term" value="P:alkaloid metabolic process"/>
    <property type="evidence" value="ECO:0007669"/>
    <property type="project" value="UniProtKB-ARBA"/>
</dbReference>
<dbReference type="GO" id="GO:0046294">
    <property type="term" value="P:formaldehyde catabolic process"/>
    <property type="evidence" value="ECO:0000318"/>
    <property type="project" value="GO_Central"/>
</dbReference>
<dbReference type="CDD" id="cd08301">
    <property type="entry name" value="alcohol_DH_plants"/>
    <property type="match status" value="1"/>
</dbReference>
<dbReference type="FunFam" id="3.90.180.10:FF:000067">
    <property type="entry name" value="alcohol dehydrogenase 1-like isoform X1"/>
    <property type="match status" value="1"/>
</dbReference>
<dbReference type="FunFam" id="3.40.50.720:FF:001292">
    <property type="entry name" value="Alcohol dehydrogenase class-P"/>
    <property type="match status" value="1"/>
</dbReference>
<dbReference type="Gene3D" id="3.90.180.10">
    <property type="entry name" value="Medium-chain alcohol dehydrogenases, catalytic domain"/>
    <property type="match status" value="1"/>
</dbReference>
<dbReference type="Gene3D" id="3.40.50.720">
    <property type="entry name" value="NAD(P)-binding Rossmann-like Domain"/>
    <property type="match status" value="1"/>
</dbReference>
<dbReference type="InterPro" id="IPR013149">
    <property type="entry name" value="ADH-like_C"/>
</dbReference>
<dbReference type="InterPro" id="IPR013154">
    <property type="entry name" value="ADH-like_N"/>
</dbReference>
<dbReference type="InterPro" id="IPR002328">
    <property type="entry name" value="ADH_Zn_CS"/>
</dbReference>
<dbReference type="InterPro" id="IPR011032">
    <property type="entry name" value="GroES-like_sf"/>
</dbReference>
<dbReference type="InterPro" id="IPR036291">
    <property type="entry name" value="NAD(P)-bd_dom_sf"/>
</dbReference>
<dbReference type="PANTHER" id="PTHR43880">
    <property type="entry name" value="ALCOHOL DEHYDROGENASE"/>
    <property type="match status" value="1"/>
</dbReference>
<dbReference type="PANTHER" id="PTHR43880:SF40">
    <property type="entry name" value="ALCOHOL DEHYDROGENASE 2"/>
    <property type="match status" value="1"/>
</dbReference>
<dbReference type="Pfam" id="PF08240">
    <property type="entry name" value="ADH_N"/>
    <property type="match status" value="1"/>
</dbReference>
<dbReference type="Pfam" id="PF00107">
    <property type="entry name" value="ADH_zinc_N"/>
    <property type="match status" value="1"/>
</dbReference>
<dbReference type="SUPFAM" id="SSF50129">
    <property type="entry name" value="GroES-like"/>
    <property type="match status" value="2"/>
</dbReference>
<dbReference type="SUPFAM" id="SSF51735">
    <property type="entry name" value="NAD(P)-binding Rossmann-fold domains"/>
    <property type="match status" value="1"/>
</dbReference>
<dbReference type="PROSITE" id="PS00059">
    <property type="entry name" value="ADH_ZINC"/>
    <property type="match status" value="1"/>
</dbReference>
<proteinExistence type="evidence at transcript level"/>
<reference key="1">
    <citation type="journal article" date="1990" name="Nucleic Acids Res.">
        <title>Nucleotide sequence of two potato alcohol dehydrogenase cDNAs.</title>
        <authorList>
            <person name="Matton D.P."/>
            <person name="Brisson N."/>
        </authorList>
    </citation>
    <scope>NUCLEOTIDE SEQUENCE [MRNA]</scope>
</reference>
<protein>
    <recommendedName>
        <fullName>Alcohol dehydrogenase 2</fullName>
        <ecNumber evidence="2">1.1.1.1</ecNumber>
    </recommendedName>
</protein>
<name>ADH2_SOLTU</name>
<organism>
    <name type="scientific">Solanum tuberosum</name>
    <name type="common">Potato</name>
    <dbReference type="NCBI Taxonomy" id="4113"/>
    <lineage>
        <taxon>Eukaryota</taxon>
        <taxon>Viridiplantae</taxon>
        <taxon>Streptophyta</taxon>
        <taxon>Embryophyta</taxon>
        <taxon>Tracheophyta</taxon>
        <taxon>Spermatophyta</taxon>
        <taxon>Magnoliopsida</taxon>
        <taxon>eudicotyledons</taxon>
        <taxon>Gunneridae</taxon>
        <taxon>Pentapetalae</taxon>
        <taxon>asterids</taxon>
        <taxon>lamiids</taxon>
        <taxon>Solanales</taxon>
        <taxon>Solanaceae</taxon>
        <taxon>Solanoideae</taxon>
        <taxon>Solaneae</taxon>
        <taxon>Solanum</taxon>
    </lineage>
</organism>
<keyword id="KW-0963">Cytoplasm</keyword>
<keyword id="KW-0479">Metal-binding</keyword>
<keyword id="KW-0520">NAD</keyword>
<keyword id="KW-0560">Oxidoreductase</keyword>
<keyword id="KW-1185">Reference proteome</keyword>
<keyword id="KW-0862">Zinc</keyword>
<gene>
    <name type="primary">ADH2</name>
</gene>
<sequence>MSTTTGQVIRCKAAVAWEAGKPLVMEEVDVAPPQKMEVRLKILYTSLCHTDVYFWEAKGQNPVFPRILGHEAAGIVESVGEGVTELAPGDHVLPVFTGECKDCAHCKSEESNMCSLLRINTDRGVMINDGQSRFSINGKPIYHFVGTSTFSEYTVVHVGCVAKINPLAPLDKVCVLSCGISTGLGATLNVAKPTKGSSVAIFGLGAVGLAAAEGARIAGASRIIGVDLNASRFEQAKKFGVTEFVNPKDYSKPVQEVIAEMTDGGVDRSVECTGHIDAMISAFECVHDGWGVAVLVGVPHKEAVFKTHPMNFLNERTLKGTFFGNYKPRSDIPSVVEKYMNKELELEKFITHTLPFAEINKAFDLMLKGEGLRCIITMED</sequence>
<feature type="chain" id="PRO_0000160713" description="Alcohol dehydrogenase 2">
    <location>
        <begin position="1"/>
        <end position="380"/>
    </location>
</feature>
<feature type="binding site" evidence="2">
    <location>
        <position position="48"/>
    </location>
    <ligand>
        <name>Zn(2+)</name>
        <dbReference type="ChEBI" id="CHEBI:29105"/>
        <label>1</label>
        <note>catalytic</note>
    </ligand>
</feature>
<feature type="binding site" evidence="2">
    <location>
        <position position="50"/>
    </location>
    <ligand>
        <name>an alcohol</name>
        <dbReference type="ChEBI" id="CHEBI:30879"/>
    </ligand>
</feature>
<feature type="binding site" evidence="2">
    <location>
        <position position="50"/>
    </location>
    <ligand>
        <name>NAD(+)</name>
        <dbReference type="ChEBI" id="CHEBI:57540"/>
    </ligand>
</feature>
<feature type="binding site" evidence="2">
    <location>
        <position position="50"/>
    </location>
    <ligand>
        <name>Zn(2+)</name>
        <dbReference type="ChEBI" id="CHEBI:29105"/>
        <label>1</label>
        <note>catalytic</note>
    </ligand>
</feature>
<feature type="binding site" evidence="1">
    <location>
        <position position="70"/>
    </location>
    <ligand>
        <name>an alcohol</name>
        <dbReference type="ChEBI" id="CHEBI:30879"/>
    </ligand>
</feature>
<feature type="binding site" evidence="2">
    <location>
        <position position="70"/>
    </location>
    <ligand>
        <name>Zn(2+)</name>
        <dbReference type="ChEBI" id="CHEBI:29105"/>
        <label>1</label>
        <note>catalytic</note>
    </ligand>
</feature>
<feature type="binding site" evidence="2">
    <location>
        <position position="100"/>
    </location>
    <ligand>
        <name>Zn(2+)</name>
        <dbReference type="ChEBI" id="CHEBI:29105"/>
        <label>2</label>
    </ligand>
</feature>
<feature type="binding site" evidence="2">
    <location>
        <position position="103"/>
    </location>
    <ligand>
        <name>Zn(2+)</name>
        <dbReference type="ChEBI" id="CHEBI:29105"/>
        <label>2</label>
    </ligand>
</feature>
<feature type="binding site" evidence="2">
    <location>
        <position position="106"/>
    </location>
    <ligand>
        <name>Zn(2+)</name>
        <dbReference type="ChEBI" id="CHEBI:29105"/>
        <label>2</label>
    </ligand>
</feature>
<feature type="binding site" evidence="2">
    <location>
        <position position="114"/>
    </location>
    <ligand>
        <name>Zn(2+)</name>
        <dbReference type="ChEBI" id="CHEBI:29105"/>
        <label>2</label>
    </ligand>
</feature>
<feature type="binding site" evidence="2">
    <location>
        <position position="178"/>
    </location>
    <ligand>
        <name>Zn(2+)</name>
        <dbReference type="ChEBI" id="CHEBI:29105"/>
        <label>1</label>
        <note>catalytic</note>
    </ligand>
</feature>
<feature type="binding site" evidence="2">
    <location>
        <begin position="203"/>
        <end position="208"/>
    </location>
    <ligand>
        <name>NAD(+)</name>
        <dbReference type="ChEBI" id="CHEBI:57540"/>
    </ligand>
</feature>
<feature type="binding site" evidence="2">
    <location>
        <position position="227"/>
    </location>
    <ligand>
        <name>NAD(+)</name>
        <dbReference type="ChEBI" id="CHEBI:57540"/>
    </ligand>
</feature>
<feature type="binding site" evidence="2">
    <location>
        <position position="232"/>
    </location>
    <ligand>
        <name>NAD(+)</name>
        <dbReference type="ChEBI" id="CHEBI:57540"/>
    </ligand>
</feature>
<feature type="binding site" evidence="2">
    <location>
        <position position="273"/>
    </location>
    <ligand>
        <name>NAD(+)</name>
        <dbReference type="ChEBI" id="CHEBI:57540"/>
    </ligand>
</feature>
<feature type="binding site" evidence="1">
    <location>
        <begin position="296"/>
        <end position="298"/>
    </location>
    <ligand>
        <name>NAD(+)</name>
        <dbReference type="ChEBI" id="CHEBI:57540"/>
    </ligand>
</feature>
<feature type="binding site" evidence="2">
    <location>
        <position position="296"/>
    </location>
    <ligand>
        <name>NAD(+)</name>
        <dbReference type="ChEBI" id="CHEBI:57540"/>
    </ligand>
</feature>
<feature type="binding site" evidence="2">
    <location>
        <position position="323"/>
    </location>
    <ligand>
        <name>NAD(+)</name>
        <dbReference type="ChEBI" id="CHEBI:57540"/>
    </ligand>
</feature>
<feature type="binding site" evidence="2">
    <location>
        <position position="373"/>
    </location>
    <ligand>
        <name>NAD(+)</name>
        <dbReference type="ChEBI" id="CHEBI:57540"/>
    </ligand>
</feature>
<evidence type="ECO:0000250" key="1">
    <source>
        <dbReference type="UniProtKB" id="P00327"/>
    </source>
</evidence>
<evidence type="ECO:0000250" key="2">
    <source>
        <dbReference type="UniProtKB" id="P06525"/>
    </source>
</evidence>
<evidence type="ECO:0000305" key="3"/>
<accession>P14674</accession>